<name>ARFRP_MOUSE</name>
<organism>
    <name type="scientific">Mus musculus</name>
    <name type="common">Mouse</name>
    <dbReference type="NCBI Taxonomy" id="10090"/>
    <lineage>
        <taxon>Eukaryota</taxon>
        <taxon>Metazoa</taxon>
        <taxon>Chordata</taxon>
        <taxon>Craniata</taxon>
        <taxon>Vertebrata</taxon>
        <taxon>Euteleostomi</taxon>
        <taxon>Mammalia</taxon>
        <taxon>Eutheria</taxon>
        <taxon>Euarchontoglires</taxon>
        <taxon>Glires</taxon>
        <taxon>Rodentia</taxon>
        <taxon>Myomorpha</taxon>
        <taxon>Muroidea</taxon>
        <taxon>Muridae</taxon>
        <taxon>Murinae</taxon>
        <taxon>Mus</taxon>
        <taxon>Mus</taxon>
    </lineage>
</organism>
<proteinExistence type="evidence at protein level"/>
<feature type="chain" id="PRO_0000207488" description="ADP-ribosylation factor-related protein 1">
    <location>
        <begin position="1"/>
        <end position="201"/>
    </location>
</feature>
<feature type="binding site" evidence="1">
    <location>
        <begin position="24"/>
        <end position="31"/>
    </location>
    <ligand>
        <name>GTP</name>
        <dbReference type="ChEBI" id="CHEBI:37565"/>
    </ligand>
</feature>
<feature type="binding site" evidence="1">
    <location>
        <begin position="75"/>
        <end position="79"/>
    </location>
    <ligand>
        <name>GTP</name>
        <dbReference type="ChEBI" id="CHEBI:37565"/>
    </ligand>
</feature>
<feature type="binding site" evidence="1">
    <location>
        <begin position="134"/>
        <end position="137"/>
    </location>
    <ligand>
        <name>GTP</name>
        <dbReference type="ChEBI" id="CHEBI:37565"/>
    </ligand>
</feature>
<feature type="modified residue" description="N-acetylmethionine" evidence="2">
    <location>
        <position position="1"/>
    </location>
</feature>
<feature type="sequence conflict" description="In Ref. 2; BAC32069." evidence="8" ref="2">
    <original>F</original>
    <variation>L</variation>
    <location>
        <position position="41"/>
    </location>
</feature>
<evidence type="ECO:0000250" key="1"/>
<evidence type="ECO:0000250" key="2">
    <source>
        <dbReference type="UniProtKB" id="Q13795"/>
    </source>
</evidence>
<evidence type="ECO:0000269" key="3">
    <source>
    </source>
</evidence>
<evidence type="ECO:0000269" key="4">
    <source>
    </source>
</evidence>
<evidence type="ECO:0000269" key="5">
    <source>
    </source>
</evidence>
<evidence type="ECO:0000269" key="6">
    <source>
    </source>
</evidence>
<evidence type="ECO:0000269" key="7">
    <source>
    </source>
</evidence>
<evidence type="ECO:0000305" key="8"/>
<comment type="function">
    <text evidence="4 6 7">Trans-Golgi-associated GTPase that regulates protein sorting. Controls the targeting of ARL1 and its effector to the trans-Golgi. Required for the lipidation of chylomicrons in the intestine and required for VLDL lipidation in the liver.</text>
</comment>
<comment type="subunit">
    <text evidence="2">Interacts with SYS1.</text>
</comment>
<comment type="subcellular location">
    <subcellularLocation>
        <location evidence="3">Golgi apparatus</location>
    </subcellularLocation>
    <subcellularLocation>
        <location evidence="3">Golgi apparatus</location>
        <location evidence="3">trans-Golgi network</location>
    </subcellularLocation>
    <text evidence="3">Located in the trans-Golgi in the GTP-bound active state.</text>
</comment>
<comment type="disruption phenotype">
    <text evidence="4 5 6 7">Disruption of the gene leads to embryonic lethality during early gastrulation. Intestine-specific knockout mice display severe growth retardation due to reduced fat absorption and decrease in lipid release from the intestinal epithelium to the lymph and blood. Liver-specific knockout mice display impaired VLDL lipidation leading to reduced plasma triglyceride levels in the fasted state. Liver-specific knockout mice also display a disturbed glucose metabolism caused by a reduced plasma membrane localization of the glucose transporter GLUT2.</text>
</comment>
<comment type="similarity">
    <text evidence="8">Belongs to the small GTPase superfamily. Arf family.</text>
</comment>
<accession>Q8BXL7</accession>
<protein>
    <recommendedName>
        <fullName>ADP-ribosylation factor-related protein 1</fullName>
        <shortName>ARF-related protein 1</shortName>
    </recommendedName>
</protein>
<gene>
    <name type="primary">Arfrp1</name>
</gene>
<dbReference type="EMBL" id="AJ413952">
    <property type="protein sequence ID" value="CAC88691.1"/>
    <property type="molecule type" value="Genomic_DNA"/>
</dbReference>
<dbReference type="EMBL" id="AJ413953">
    <property type="protein sequence ID" value="CAC88692.1"/>
    <property type="molecule type" value="mRNA"/>
</dbReference>
<dbReference type="EMBL" id="AK005174">
    <property type="protein sequence ID" value="BAB23861.1"/>
    <property type="molecule type" value="mRNA"/>
</dbReference>
<dbReference type="EMBL" id="AK044759">
    <property type="protein sequence ID" value="BAC32069.1"/>
    <property type="molecule type" value="mRNA"/>
</dbReference>
<dbReference type="EMBL" id="BC010713">
    <property type="protein sequence ID" value="AAH10713.1"/>
    <property type="molecule type" value="mRNA"/>
</dbReference>
<dbReference type="CCDS" id="CCDS17209.1"/>
<dbReference type="RefSeq" id="NP_001159463.1">
    <property type="nucleotide sequence ID" value="NM_001165991.1"/>
</dbReference>
<dbReference type="RefSeq" id="NP_001159464.1">
    <property type="nucleotide sequence ID" value="NM_001165992.1"/>
</dbReference>
<dbReference type="RefSeq" id="NP_083978.3">
    <property type="nucleotide sequence ID" value="NM_029702.4"/>
</dbReference>
<dbReference type="RefSeq" id="XP_011238267.1">
    <property type="nucleotide sequence ID" value="XM_011239965.2"/>
</dbReference>
<dbReference type="SMR" id="Q8BXL7"/>
<dbReference type="BioGRID" id="218262">
    <property type="interactions" value="3"/>
</dbReference>
<dbReference type="FunCoup" id="Q8BXL7">
    <property type="interactions" value="2493"/>
</dbReference>
<dbReference type="STRING" id="10090.ENSMUSP00000122066"/>
<dbReference type="PhosphoSitePlus" id="Q8BXL7"/>
<dbReference type="jPOST" id="Q8BXL7"/>
<dbReference type="PaxDb" id="10090-ENSMUSP00000104436"/>
<dbReference type="PeptideAtlas" id="Q8BXL7"/>
<dbReference type="ProteomicsDB" id="273922"/>
<dbReference type="Pumba" id="Q8BXL7"/>
<dbReference type="Antibodypedia" id="29845">
    <property type="antibodies" value="124 antibodies from 26 providers"/>
</dbReference>
<dbReference type="DNASU" id="76688"/>
<dbReference type="Ensembl" id="ENSMUST00000108808.8">
    <property type="protein sequence ID" value="ENSMUSP00000104436.2"/>
    <property type="gene ID" value="ENSMUSG00000038671.16"/>
</dbReference>
<dbReference type="Ensembl" id="ENSMUST00000127988.8">
    <property type="protein sequence ID" value="ENSMUSP00000122066.2"/>
    <property type="gene ID" value="ENSMUSG00000038671.16"/>
</dbReference>
<dbReference type="GeneID" id="76688"/>
<dbReference type="KEGG" id="mmu:76688"/>
<dbReference type="UCSC" id="uc008oly.2">
    <property type="organism name" value="mouse"/>
</dbReference>
<dbReference type="AGR" id="MGI:1923938"/>
<dbReference type="CTD" id="10139"/>
<dbReference type="MGI" id="MGI:1923938">
    <property type="gene designation" value="Arfrp1"/>
</dbReference>
<dbReference type="VEuPathDB" id="HostDB:ENSMUSG00000038671"/>
<dbReference type="eggNOG" id="KOG0076">
    <property type="taxonomic scope" value="Eukaryota"/>
</dbReference>
<dbReference type="GeneTree" id="ENSGT00940000156407"/>
<dbReference type="HOGENOM" id="CLU_040729_7_2_1"/>
<dbReference type="InParanoid" id="Q8BXL7"/>
<dbReference type="OMA" id="HGFYKYM"/>
<dbReference type="OrthoDB" id="414781at2759"/>
<dbReference type="PhylomeDB" id="Q8BXL7"/>
<dbReference type="TreeFam" id="TF105788"/>
<dbReference type="Reactome" id="R-MMU-6811440">
    <property type="pathway name" value="Retrograde transport at the Trans-Golgi-Network"/>
</dbReference>
<dbReference type="BioGRID-ORCS" id="76688">
    <property type="hits" value="28 hits in 79 CRISPR screens"/>
</dbReference>
<dbReference type="PRO" id="PR:Q8BXL7"/>
<dbReference type="Proteomes" id="UP000000589">
    <property type="component" value="Chromosome 2"/>
</dbReference>
<dbReference type="RNAct" id="Q8BXL7">
    <property type="molecule type" value="protein"/>
</dbReference>
<dbReference type="Bgee" id="ENSMUSG00000038671">
    <property type="expression patterns" value="Expressed in saccule of membranous labyrinth and 261 other cell types or tissues"/>
</dbReference>
<dbReference type="ExpressionAtlas" id="Q8BXL7">
    <property type="expression patterns" value="baseline and differential"/>
</dbReference>
<dbReference type="GO" id="GO:0005829">
    <property type="term" value="C:cytosol"/>
    <property type="evidence" value="ECO:0007669"/>
    <property type="project" value="GOC"/>
</dbReference>
<dbReference type="GO" id="GO:0016020">
    <property type="term" value="C:membrane"/>
    <property type="evidence" value="ECO:0000314"/>
    <property type="project" value="MGI"/>
</dbReference>
<dbReference type="GO" id="GO:0005802">
    <property type="term" value="C:trans-Golgi network"/>
    <property type="evidence" value="ECO:0007669"/>
    <property type="project" value="Ensembl"/>
</dbReference>
<dbReference type="GO" id="GO:0005525">
    <property type="term" value="F:GTP binding"/>
    <property type="evidence" value="ECO:0007669"/>
    <property type="project" value="UniProtKB-KW"/>
</dbReference>
<dbReference type="GO" id="GO:0003924">
    <property type="term" value="F:GTPase activity"/>
    <property type="evidence" value="ECO:0000266"/>
    <property type="project" value="MGI"/>
</dbReference>
<dbReference type="GO" id="GO:0007369">
    <property type="term" value="P:gastrulation"/>
    <property type="evidence" value="ECO:0000315"/>
    <property type="project" value="MGI"/>
</dbReference>
<dbReference type="GO" id="GO:0043001">
    <property type="term" value="P:Golgi to plasma membrane protein transport"/>
    <property type="evidence" value="ECO:0007669"/>
    <property type="project" value="Ensembl"/>
</dbReference>
<dbReference type="GO" id="GO:0034067">
    <property type="term" value="P:protein localization to Golgi apparatus"/>
    <property type="evidence" value="ECO:0007669"/>
    <property type="project" value="Ensembl"/>
</dbReference>
<dbReference type="GO" id="GO:0042147">
    <property type="term" value="P:retrograde transport, endosome to Golgi"/>
    <property type="evidence" value="ECO:0007669"/>
    <property type="project" value="Ensembl"/>
</dbReference>
<dbReference type="CDD" id="cd04160">
    <property type="entry name" value="Arfrp1"/>
    <property type="match status" value="1"/>
</dbReference>
<dbReference type="FunFam" id="3.40.50.300:FF:000509">
    <property type="entry name" value="ADP-ribosylation factor-related protein 1"/>
    <property type="match status" value="1"/>
</dbReference>
<dbReference type="Gene3D" id="3.40.50.300">
    <property type="entry name" value="P-loop containing nucleotide triphosphate hydrolases"/>
    <property type="match status" value="1"/>
</dbReference>
<dbReference type="InterPro" id="IPR027417">
    <property type="entry name" value="P-loop_NTPase"/>
</dbReference>
<dbReference type="InterPro" id="IPR005225">
    <property type="entry name" value="Small_GTP-bd"/>
</dbReference>
<dbReference type="InterPro" id="IPR024156">
    <property type="entry name" value="Small_GTPase_ARF"/>
</dbReference>
<dbReference type="InterPro" id="IPR006689">
    <property type="entry name" value="Small_GTPase_ARF/SAR"/>
</dbReference>
<dbReference type="NCBIfam" id="TIGR00231">
    <property type="entry name" value="small_GTP"/>
    <property type="match status" value="1"/>
</dbReference>
<dbReference type="PANTHER" id="PTHR45909">
    <property type="entry name" value="ADP-RIBOSYLATION FACTOR-RELATED PROTEIN 1"/>
    <property type="match status" value="1"/>
</dbReference>
<dbReference type="PANTHER" id="PTHR45909:SF1">
    <property type="entry name" value="ADP-RIBOSYLATION FACTOR-RELATED PROTEIN 1"/>
    <property type="match status" value="1"/>
</dbReference>
<dbReference type="Pfam" id="PF00025">
    <property type="entry name" value="Arf"/>
    <property type="match status" value="1"/>
</dbReference>
<dbReference type="PRINTS" id="PR00449">
    <property type="entry name" value="RASTRNSFRMNG"/>
</dbReference>
<dbReference type="SMART" id="SM00177">
    <property type="entry name" value="ARF"/>
    <property type="match status" value="1"/>
</dbReference>
<dbReference type="SMART" id="SM00175">
    <property type="entry name" value="RAB"/>
    <property type="match status" value="1"/>
</dbReference>
<dbReference type="SMART" id="SM00178">
    <property type="entry name" value="SAR"/>
    <property type="match status" value="1"/>
</dbReference>
<dbReference type="SUPFAM" id="SSF52540">
    <property type="entry name" value="P-loop containing nucleoside triphosphate hydrolases"/>
    <property type="match status" value="1"/>
</dbReference>
<dbReference type="PROSITE" id="PS51417">
    <property type="entry name" value="ARF"/>
    <property type="match status" value="1"/>
</dbReference>
<reference key="1">
    <citation type="journal article" date="2002" name="Mol. Cell. Biol.">
        <title>Embryonic lethality caused by apoptosis during gastrulation in mice lacking the gene of the ADP-ribosylation factor-related protein 1.</title>
        <authorList>
            <person name="Mueller A.G."/>
            <person name="Moser M."/>
            <person name="Kluge R."/>
            <person name="Leder S."/>
            <person name="Blum M."/>
            <person name="Buttner R."/>
            <person name="Joost H.-G."/>
            <person name="Schurmann A."/>
        </authorList>
    </citation>
    <scope>NUCLEOTIDE SEQUENCE [GENOMIC DNA / MRNA]</scope>
    <source>
        <strain>129/SvJ</strain>
        <tissue>Liver</tissue>
    </source>
</reference>
<reference key="2">
    <citation type="journal article" date="2005" name="Science">
        <title>The transcriptional landscape of the mammalian genome.</title>
        <authorList>
            <person name="Carninci P."/>
            <person name="Kasukawa T."/>
            <person name="Katayama S."/>
            <person name="Gough J."/>
            <person name="Frith M.C."/>
            <person name="Maeda N."/>
            <person name="Oyama R."/>
            <person name="Ravasi T."/>
            <person name="Lenhard B."/>
            <person name="Wells C."/>
            <person name="Kodzius R."/>
            <person name="Shimokawa K."/>
            <person name="Bajic V.B."/>
            <person name="Brenner S.E."/>
            <person name="Batalov S."/>
            <person name="Forrest A.R."/>
            <person name="Zavolan M."/>
            <person name="Davis M.J."/>
            <person name="Wilming L.G."/>
            <person name="Aidinis V."/>
            <person name="Allen J.E."/>
            <person name="Ambesi-Impiombato A."/>
            <person name="Apweiler R."/>
            <person name="Aturaliya R.N."/>
            <person name="Bailey T.L."/>
            <person name="Bansal M."/>
            <person name="Baxter L."/>
            <person name="Beisel K.W."/>
            <person name="Bersano T."/>
            <person name="Bono H."/>
            <person name="Chalk A.M."/>
            <person name="Chiu K.P."/>
            <person name="Choudhary V."/>
            <person name="Christoffels A."/>
            <person name="Clutterbuck D.R."/>
            <person name="Crowe M.L."/>
            <person name="Dalla E."/>
            <person name="Dalrymple B.P."/>
            <person name="de Bono B."/>
            <person name="Della Gatta G."/>
            <person name="di Bernardo D."/>
            <person name="Down T."/>
            <person name="Engstrom P."/>
            <person name="Fagiolini M."/>
            <person name="Faulkner G."/>
            <person name="Fletcher C.F."/>
            <person name="Fukushima T."/>
            <person name="Furuno M."/>
            <person name="Futaki S."/>
            <person name="Gariboldi M."/>
            <person name="Georgii-Hemming P."/>
            <person name="Gingeras T.R."/>
            <person name="Gojobori T."/>
            <person name="Green R.E."/>
            <person name="Gustincich S."/>
            <person name="Harbers M."/>
            <person name="Hayashi Y."/>
            <person name="Hensch T.K."/>
            <person name="Hirokawa N."/>
            <person name="Hill D."/>
            <person name="Huminiecki L."/>
            <person name="Iacono M."/>
            <person name="Ikeo K."/>
            <person name="Iwama A."/>
            <person name="Ishikawa T."/>
            <person name="Jakt M."/>
            <person name="Kanapin A."/>
            <person name="Katoh M."/>
            <person name="Kawasawa Y."/>
            <person name="Kelso J."/>
            <person name="Kitamura H."/>
            <person name="Kitano H."/>
            <person name="Kollias G."/>
            <person name="Krishnan S.P."/>
            <person name="Kruger A."/>
            <person name="Kummerfeld S.K."/>
            <person name="Kurochkin I.V."/>
            <person name="Lareau L.F."/>
            <person name="Lazarevic D."/>
            <person name="Lipovich L."/>
            <person name="Liu J."/>
            <person name="Liuni S."/>
            <person name="McWilliam S."/>
            <person name="Madan Babu M."/>
            <person name="Madera M."/>
            <person name="Marchionni L."/>
            <person name="Matsuda H."/>
            <person name="Matsuzawa S."/>
            <person name="Miki H."/>
            <person name="Mignone F."/>
            <person name="Miyake S."/>
            <person name="Morris K."/>
            <person name="Mottagui-Tabar S."/>
            <person name="Mulder N."/>
            <person name="Nakano N."/>
            <person name="Nakauchi H."/>
            <person name="Ng P."/>
            <person name="Nilsson R."/>
            <person name="Nishiguchi S."/>
            <person name="Nishikawa S."/>
            <person name="Nori F."/>
            <person name="Ohara O."/>
            <person name="Okazaki Y."/>
            <person name="Orlando V."/>
            <person name="Pang K.C."/>
            <person name="Pavan W.J."/>
            <person name="Pavesi G."/>
            <person name="Pesole G."/>
            <person name="Petrovsky N."/>
            <person name="Piazza S."/>
            <person name="Reed J."/>
            <person name="Reid J.F."/>
            <person name="Ring B.Z."/>
            <person name="Ringwald M."/>
            <person name="Rost B."/>
            <person name="Ruan Y."/>
            <person name="Salzberg S.L."/>
            <person name="Sandelin A."/>
            <person name="Schneider C."/>
            <person name="Schoenbach C."/>
            <person name="Sekiguchi K."/>
            <person name="Semple C.A."/>
            <person name="Seno S."/>
            <person name="Sessa L."/>
            <person name="Sheng Y."/>
            <person name="Shibata Y."/>
            <person name="Shimada H."/>
            <person name="Shimada K."/>
            <person name="Silva D."/>
            <person name="Sinclair B."/>
            <person name="Sperling S."/>
            <person name="Stupka E."/>
            <person name="Sugiura K."/>
            <person name="Sultana R."/>
            <person name="Takenaka Y."/>
            <person name="Taki K."/>
            <person name="Tammoja K."/>
            <person name="Tan S.L."/>
            <person name="Tang S."/>
            <person name="Taylor M.S."/>
            <person name="Tegner J."/>
            <person name="Teichmann S.A."/>
            <person name="Ueda H.R."/>
            <person name="van Nimwegen E."/>
            <person name="Verardo R."/>
            <person name="Wei C.L."/>
            <person name="Yagi K."/>
            <person name="Yamanishi H."/>
            <person name="Zabarovsky E."/>
            <person name="Zhu S."/>
            <person name="Zimmer A."/>
            <person name="Hide W."/>
            <person name="Bult C."/>
            <person name="Grimmond S.M."/>
            <person name="Teasdale R.D."/>
            <person name="Liu E.T."/>
            <person name="Brusic V."/>
            <person name="Quackenbush J."/>
            <person name="Wahlestedt C."/>
            <person name="Mattick J.S."/>
            <person name="Hume D.A."/>
            <person name="Kai C."/>
            <person name="Sasaki D."/>
            <person name="Tomaru Y."/>
            <person name="Fukuda S."/>
            <person name="Kanamori-Katayama M."/>
            <person name="Suzuki M."/>
            <person name="Aoki J."/>
            <person name="Arakawa T."/>
            <person name="Iida J."/>
            <person name="Imamura K."/>
            <person name="Itoh M."/>
            <person name="Kato T."/>
            <person name="Kawaji H."/>
            <person name="Kawagashira N."/>
            <person name="Kawashima T."/>
            <person name="Kojima M."/>
            <person name="Kondo S."/>
            <person name="Konno H."/>
            <person name="Nakano K."/>
            <person name="Ninomiya N."/>
            <person name="Nishio T."/>
            <person name="Okada M."/>
            <person name="Plessy C."/>
            <person name="Shibata K."/>
            <person name="Shiraki T."/>
            <person name="Suzuki S."/>
            <person name="Tagami M."/>
            <person name="Waki K."/>
            <person name="Watahiki A."/>
            <person name="Okamura-Oho Y."/>
            <person name="Suzuki H."/>
            <person name="Kawai J."/>
            <person name="Hayashizaki Y."/>
        </authorList>
    </citation>
    <scope>NUCLEOTIDE SEQUENCE [LARGE SCALE MRNA]</scope>
    <source>
        <strain>C57BL/6J</strain>
        <tissue>Cerebellum</tissue>
        <tissue>Retina</tissue>
    </source>
</reference>
<reference key="3">
    <citation type="journal article" date="2004" name="Genome Res.">
        <title>The status, quality, and expansion of the NIH full-length cDNA project: the Mammalian Gene Collection (MGC).</title>
        <authorList>
            <consortium name="The MGC Project Team"/>
        </authorList>
    </citation>
    <scope>NUCLEOTIDE SEQUENCE [LARGE SCALE MRNA]</scope>
    <source>
        <strain>129</strain>
        <tissue>Mammary tumor</tissue>
    </source>
</reference>
<reference key="4">
    <citation type="journal article" date="2006" name="Mol. Membr. Biol.">
        <title>Knockout of Arfrp1 leads to disruption of ARF-like1 (ARL1) targeting to the trans-Golgi in mouse embryos and HeLa cells.</title>
        <authorList>
            <person name="Zahn C."/>
            <person name="Hommel A."/>
            <person name="Lu L."/>
            <person name="Hong W."/>
            <person name="Walther D.J."/>
            <person name="Florian S."/>
            <person name="Joost H.G."/>
            <person name="Schurmann A."/>
        </authorList>
    </citation>
    <scope>SUBCELLULAR LOCATION</scope>
    <scope>FUNCTION</scope>
    <scope>DISRUPTION PHENOTYPE</scope>
</reference>
<reference key="5">
    <citation type="journal article" date="2010" name="Cell">
        <title>A tissue-specific atlas of mouse protein phosphorylation and expression.</title>
        <authorList>
            <person name="Huttlin E.L."/>
            <person name="Jedrychowski M.P."/>
            <person name="Elias J.E."/>
            <person name="Goswami T."/>
            <person name="Rad R."/>
            <person name="Beausoleil S.A."/>
            <person name="Villen J."/>
            <person name="Haas W."/>
            <person name="Sowa M.E."/>
            <person name="Gygi S.P."/>
        </authorList>
    </citation>
    <scope>IDENTIFICATION BY MASS SPECTROMETRY [LARGE SCALE ANALYSIS]</scope>
    <source>
        <tissue>Brain</tissue>
        <tissue>Brown adipose tissue</tissue>
        <tissue>Heart</tissue>
        <tissue>Kidney</tissue>
        <tissue>Liver</tissue>
        <tissue>Lung</tissue>
        <tissue>Pancreas</tissue>
        <tissue>Spleen</tissue>
        <tissue>Testis</tissue>
    </source>
</reference>
<reference key="6">
    <citation type="journal article" date="2012" name="Mol. Cell. Biol.">
        <title>GTPase ARFRP1 is essential for normal hepatic glycogen storage and insulin-like growth factor 1 secretion.</title>
        <authorList>
            <person name="Hesse D."/>
            <person name="Jaschke A."/>
            <person name="Kanzleiter T."/>
            <person name="Witte N."/>
            <person name="Augustin R."/>
            <person name="Hommel A."/>
            <person name="Puschel G.P."/>
            <person name="Petzke K.J."/>
            <person name="Joost H.G."/>
            <person name="Schupp M."/>
            <person name="Schurmann A."/>
        </authorList>
    </citation>
    <scope>FUNCTION AND DISRUPTION PHENOTYPE</scope>
</reference>
<reference key="7">
    <citation type="journal article" date="2012" name="Hum. Mol. Genet.">
        <title>The GTPase ARFRP1 controls the lipidation of chylomicrons in the Golgi of the intestinal epithelium.</title>
        <authorList>
            <person name="Jaschke A."/>
            <person name="Chung B."/>
            <person name="Hesse D."/>
            <person name="Kluge R."/>
            <person name="Zahn C."/>
            <person name="Moser M."/>
            <person name="Petzke K.J."/>
            <person name="Brigelius-Flohe R."/>
            <person name="Puchkov D."/>
            <person name="Koepsell H."/>
            <person name="Heeren J."/>
            <person name="Joost H.G."/>
            <person name="Schurmann A."/>
        </authorList>
    </citation>
    <scope>FUNCTION</scope>
    <scope>DISRUPTION PHENOTYPE</scope>
</reference>
<reference key="8">
    <citation type="journal article" date="2013" name="Biosci. Rep.">
        <title>Trans-Golgi proteins participate in the control of lipid droplet and chylomicron formation.</title>
        <authorList>
            <person name="Hesse D."/>
            <person name="Jaschke A."/>
            <person name="Chung B."/>
            <person name="Schuermann A."/>
        </authorList>
    </citation>
    <scope>FUNCTION AND DISRUPTION PHENOTYPE</scope>
</reference>
<reference key="9">
    <citation type="journal article" date="2014" name="J. Lipid Res.">
        <title>Hepatic trans-Golgi action coordinated by the GTPase ARFRP1 is crucial for lipoprotein lipidation and assembly.</title>
        <authorList>
            <person name="Hesse D."/>
            <person name="Radloff K."/>
            <person name="Jaschke A."/>
            <person name="Lagerpusch M."/>
            <person name="Chung B."/>
            <person name="Tailleux A."/>
            <person name="Staels B."/>
            <person name="Schurmann A."/>
        </authorList>
    </citation>
    <scope>FUNCTION</scope>
    <scope>DISRUPTION PHENOTYPE</scope>
</reference>
<keyword id="KW-0007">Acetylation</keyword>
<keyword id="KW-0333">Golgi apparatus</keyword>
<keyword id="KW-0342">GTP-binding</keyword>
<keyword id="KW-0547">Nucleotide-binding</keyword>
<keyword id="KW-1185">Reference proteome</keyword>
<sequence>MYTLLSGLYKYMFQKDEYCILILGLDNAGKTTFLEQSKTRFNKNYKGMSLSKITTTVGLNIGTVDVGKARLMFWDLGGQEELQSLWDKYYAECHGVIYVIDSTDEERLSESKEAFEKVVSSEALDGVPILVLANKQDVETCLSIPDIKTAFSDCTCKIGRRDCLTQACSALTGKGVREGIEWMVKCVVRNVHRPPRQRDIT</sequence>